<dbReference type="EMBL" id="CP000029">
    <property type="protein sequence ID" value="AAW53334.1"/>
    <property type="molecule type" value="Genomic_DNA"/>
</dbReference>
<dbReference type="RefSeq" id="WP_002486035.1">
    <property type="nucleotide sequence ID" value="NC_002976.3"/>
</dbReference>
<dbReference type="SMR" id="Q5HK85"/>
<dbReference type="KEGG" id="ser:SERP2465"/>
<dbReference type="eggNOG" id="ENOG5033UD8">
    <property type="taxonomic scope" value="Bacteria"/>
</dbReference>
<dbReference type="HOGENOM" id="CLU_071589_0_1_9"/>
<dbReference type="Proteomes" id="UP000000531">
    <property type="component" value="Chromosome"/>
</dbReference>
<dbReference type="GO" id="GO:0005886">
    <property type="term" value="C:plasma membrane"/>
    <property type="evidence" value="ECO:0007669"/>
    <property type="project" value="UniProtKB-SubCell"/>
</dbReference>
<dbReference type="Gene3D" id="2.50.20.40">
    <property type="match status" value="1"/>
</dbReference>
<dbReference type="InterPro" id="IPR007595">
    <property type="entry name" value="Csa"/>
</dbReference>
<dbReference type="InterPro" id="IPR038641">
    <property type="entry name" value="Csa_sf"/>
</dbReference>
<dbReference type="NCBIfam" id="TIGR01742">
    <property type="entry name" value="SA_tandem_lipo"/>
    <property type="match status" value="1"/>
</dbReference>
<dbReference type="Pfam" id="PF04507">
    <property type="entry name" value="DUF576"/>
    <property type="match status" value="1"/>
</dbReference>
<dbReference type="PROSITE" id="PS51257">
    <property type="entry name" value="PROKAR_LIPOPROTEIN"/>
    <property type="match status" value="1"/>
</dbReference>
<feature type="signal peptide" evidence="1">
    <location>
        <begin position="1"/>
        <end position="22"/>
    </location>
</feature>
<feature type="chain" id="PRO_0000282190" description="Uncharacterized lipoprotein SERP2465">
    <location>
        <begin position="23"/>
        <end position="259"/>
    </location>
</feature>
<feature type="lipid moiety-binding region" description="N-palmitoyl cysteine" evidence="1">
    <location>
        <position position="23"/>
    </location>
</feature>
<feature type="lipid moiety-binding region" description="S-diacylglycerol cysteine" evidence="1">
    <location>
        <position position="23"/>
    </location>
</feature>
<name>Y2465_STAEQ</name>
<protein>
    <recommendedName>
        <fullName>Uncharacterized lipoprotein SERP2465</fullName>
    </recommendedName>
</protein>
<reference key="1">
    <citation type="journal article" date="2005" name="J. Bacteriol.">
        <title>Insights on evolution of virulence and resistance from the complete genome analysis of an early methicillin-resistant Staphylococcus aureus strain and a biofilm-producing methicillin-resistant Staphylococcus epidermidis strain.</title>
        <authorList>
            <person name="Gill S.R."/>
            <person name="Fouts D.E."/>
            <person name="Archer G.L."/>
            <person name="Mongodin E.F."/>
            <person name="DeBoy R.T."/>
            <person name="Ravel J."/>
            <person name="Paulsen I.T."/>
            <person name="Kolonay J.F."/>
            <person name="Brinkac L.M."/>
            <person name="Beanan M.J."/>
            <person name="Dodson R.J."/>
            <person name="Daugherty S.C."/>
            <person name="Madupu R."/>
            <person name="Angiuoli S.V."/>
            <person name="Durkin A.S."/>
            <person name="Haft D.H."/>
            <person name="Vamathevan J.J."/>
            <person name="Khouri H."/>
            <person name="Utterback T.R."/>
            <person name="Lee C."/>
            <person name="Dimitrov G."/>
            <person name="Jiang L."/>
            <person name="Qin H."/>
            <person name="Weidman J."/>
            <person name="Tran K."/>
            <person name="Kang K.H."/>
            <person name="Hance I.R."/>
            <person name="Nelson K.E."/>
            <person name="Fraser C.M."/>
        </authorList>
    </citation>
    <scope>NUCLEOTIDE SEQUENCE [LARGE SCALE GENOMIC DNA]</scope>
    <source>
        <strain>ATCC 35984 / DSM 28319 / BCRC 17069 / CCUG 31568 / BM 3577 / RP62A</strain>
    </source>
</reference>
<comment type="subcellular location">
    <subcellularLocation>
        <location evidence="1">Cell membrane</location>
        <topology evidence="1">Lipid-anchor</topology>
    </subcellularLocation>
</comment>
<comment type="similarity">
    <text evidence="2">Belongs to the staphylococcal tandem lipoprotein family.</text>
</comment>
<proteinExistence type="inferred from homology"/>
<sequence>MKHSKKLLLCISFLLITFFISGCGFMNKDDSKETEIKKSFNKTLSMYPIKNLEDLYDKEGYRDEEFDKDDKGTWLLHSEMAIQRKGEDLETRGMVLKINRNTQTSKGDYITNKITYDNKGRPQSNKKKYPVKMENNKIIPIKKIEDSKINREINEFKFFAQYANFKELKDYKNGNISYNPNVPSYSAEYDLENTDYNVKQLRERYDIPTKQAPKLLLKGTGDLKGSSIGTKDVEFTFVKGKQENIYFSDSMNFMPSEDD</sequence>
<gene>
    <name type="ordered locus">SERP2465</name>
</gene>
<accession>Q5HK85</accession>
<evidence type="ECO:0000255" key="1">
    <source>
        <dbReference type="PROSITE-ProRule" id="PRU00303"/>
    </source>
</evidence>
<evidence type="ECO:0000305" key="2"/>
<organism>
    <name type="scientific">Staphylococcus epidermidis (strain ATCC 35984 / DSM 28319 / BCRC 17069 / CCUG 31568 / BM 3577 / RP62A)</name>
    <dbReference type="NCBI Taxonomy" id="176279"/>
    <lineage>
        <taxon>Bacteria</taxon>
        <taxon>Bacillati</taxon>
        <taxon>Bacillota</taxon>
        <taxon>Bacilli</taxon>
        <taxon>Bacillales</taxon>
        <taxon>Staphylococcaceae</taxon>
        <taxon>Staphylococcus</taxon>
    </lineage>
</organism>
<keyword id="KW-1003">Cell membrane</keyword>
<keyword id="KW-0449">Lipoprotein</keyword>
<keyword id="KW-0472">Membrane</keyword>
<keyword id="KW-0564">Palmitate</keyword>
<keyword id="KW-1185">Reference proteome</keyword>
<keyword id="KW-0732">Signal</keyword>